<proteinExistence type="inferred from homology"/>
<reference key="1">
    <citation type="journal article" date="2002" name="Genome Res.">
        <title>The genome of Methanosarcina acetivorans reveals extensive metabolic and physiological diversity.</title>
        <authorList>
            <person name="Galagan J.E."/>
            <person name="Nusbaum C."/>
            <person name="Roy A."/>
            <person name="Endrizzi M.G."/>
            <person name="Macdonald P."/>
            <person name="FitzHugh W."/>
            <person name="Calvo S."/>
            <person name="Engels R."/>
            <person name="Smirnov S."/>
            <person name="Atnoor D."/>
            <person name="Brown A."/>
            <person name="Allen N."/>
            <person name="Naylor J."/>
            <person name="Stange-Thomann N."/>
            <person name="DeArellano K."/>
            <person name="Johnson R."/>
            <person name="Linton L."/>
            <person name="McEwan P."/>
            <person name="McKernan K."/>
            <person name="Talamas J."/>
            <person name="Tirrell A."/>
            <person name="Ye W."/>
            <person name="Zimmer A."/>
            <person name="Barber R.D."/>
            <person name="Cann I."/>
            <person name="Graham D.E."/>
            <person name="Grahame D.A."/>
            <person name="Guss A.M."/>
            <person name="Hedderich R."/>
            <person name="Ingram-Smith C."/>
            <person name="Kuettner H.C."/>
            <person name="Krzycki J.A."/>
            <person name="Leigh J.A."/>
            <person name="Li W."/>
            <person name="Liu J."/>
            <person name="Mukhopadhyay B."/>
            <person name="Reeve J.N."/>
            <person name="Smith K."/>
            <person name="Springer T.A."/>
            <person name="Umayam L.A."/>
            <person name="White O."/>
            <person name="White R.H."/>
            <person name="de Macario E.C."/>
            <person name="Ferry J.G."/>
            <person name="Jarrell K.F."/>
            <person name="Jing H."/>
            <person name="Macario A.J.L."/>
            <person name="Paulsen I.T."/>
            <person name="Pritchett M."/>
            <person name="Sowers K.R."/>
            <person name="Swanson R.V."/>
            <person name="Zinder S.H."/>
            <person name="Lander E."/>
            <person name="Metcalf W.W."/>
            <person name="Birren B."/>
        </authorList>
    </citation>
    <scope>NUCLEOTIDE SEQUENCE [LARGE SCALE GENOMIC DNA]</scope>
    <source>
        <strain>ATCC 35395 / DSM 2834 / JCM 12185 / C2A</strain>
    </source>
</reference>
<organism>
    <name type="scientific">Methanosarcina acetivorans (strain ATCC 35395 / DSM 2834 / JCM 12185 / C2A)</name>
    <dbReference type="NCBI Taxonomy" id="188937"/>
    <lineage>
        <taxon>Archaea</taxon>
        <taxon>Methanobacteriati</taxon>
        <taxon>Methanobacteriota</taxon>
        <taxon>Stenosarchaea group</taxon>
        <taxon>Methanomicrobia</taxon>
        <taxon>Methanosarcinales</taxon>
        <taxon>Methanosarcinaceae</taxon>
        <taxon>Methanosarcina</taxon>
    </lineage>
</organism>
<sequence length="283" mass="30384">MKIIGGPASQLLASRTARALGTEPVLCEFNRFPDGELYLRIADEIENEKVTIIQSTPTDSDFVALLQLIDACEGAAEINVVIPYMGYARQDKKFKPGESISARAIARCINASRIFTINIHERSILDHFPCPAVNLDAASLVGEYIAGSGLENPMLVAPDEGAQGLVKNVAAGHGFDHDHLQKTRLSGDTVVIKTKNLDVTGRHVVLVDDMIATGGTMAESVRMLKAQGAIDVHLACVHPVLTRNAALRLFNAGVKDIIATDTLEKAESLLSVAPLIAEALKRL</sequence>
<comment type="function">
    <text evidence="1">Involved in the biosynthesis of the central metabolite phospho-alpha-D-ribosyl-1-pyrophosphate (PRPP) via the transfer of pyrophosphoryl group from ATP to 1-hydroxyl of ribose-5-phosphate (Rib-5-P).</text>
</comment>
<comment type="catalytic activity">
    <reaction evidence="1">
        <text>D-ribose 5-phosphate + ATP = 5-phospho-alpha-D-ribose 1-diphosphate + AMP + H(+)</text>
        <dbReference type="Rhea" id="RHEA:15609"/>
        <dbReference type="ChEBI" id="CHEBI:15378"/>
        <dbReference type="ChEBI" id="CHEBI:30616"/>
        <dbReference type="ChEBI" id="CHEBI:58017"/>
        <dbReference type="ChEBI" id="CHEBI:78346"/>
        <dbReference type="ChEBI" id="CHEBI:456215"/>
        <dbReference type="EC" id="2.7.6.1"/>
    </reaction>
</comment>
<comment type="cofactor">
    <cofactor evidence="1">
        <name>Mg(2+)</name>
        <dbReference type="ChEBI" id="CHEBI:18420"/>
    </cofactor>
    <text evidence="1">Binds 2 Mg(2+) ions per subunit.</text>
</comment>
<comment type="pathway">
    <text evidence="1">Metabolic intermediate biosynthesis; 5-phospho-alpha-D-ribose 1-diphosphate biosynthesis; 5-phospho-alpha-D-ribose 1-diphosphate from D-ribose 5-phosphate (route I): step 1/1.</text>
</comment>
<comment type="subcellular location">
    <subcellularLocation>
        <location evidence="1">Cytoplasm</location>
    </subcellularLocation>
</comment>
<comment type="similarity">
    <text evidence="1">Belongs to the ribose-phosphate pyrophosphokinase family. Class III (archaeal) subfamily.</text>
</comment>
<feature type="chain" id="PRO_0000141237" description="Ribose-phosphate pyrophosphokinase">
    <location>
        <begin position="1"/>
        <end position="283"/>
    </location>
</feature>
<feature type="active site" evidence="1">
    <location>
        <position position="182"/>
    </location>
</feature>
<feature type="binding site" evidence="1">
    <location>
        <begin position="34"/>
        <end position="36"/>
    </location>
    <ligand>
        <name>ATP</name>
        <dbReference type="ChEBI" id="CHEBI:30616"/>
    </ligand>
</feature>
<feature type="binding site" evidence="1">
    <location>
        <begin position="89"/>
        <end position="90"/>
    </location>
    <ligand>
        <name>ATP</name>
        <dbReference type="ChEBI" id="CHEBI:30616"/>
    </ligand>
</feature>
<feature type="binding site" evidence="1">
    <location>
        <position position="120"/>
    </location>
    <ligand>
        <name>Mg(2+)</name>
        <dbReference type="ChEBI" id="CHEBI:18420"/>
        <label>1</label>
    </ligand>
</feature>
<feature type="binding site" evidence="1">
    <location>
        <position position="159"/>
    </location>
    <ligand>
        <name>Mg(2+)</name>
        <dbReference type="ChEBI" id="CHEBI:18420"/>
        <label>2</label>
    </ligand>
</feature>
<feature type="binding site" evidence="1">
    <location>
        <position position="184"/>
    </location>
    <ligand>
        <name>D-ribose 5-phosphate</name>
        <dbReference type="ChEBI" id="CHEBI:78346"/>
    </ligand>
</feature>
<feature type="binding site" evidence="1">
    <location>
        <position position="208"/>
    </location>
    <ligand>
        <name>D-ribose 5-phosphate</name>
        <dbReference type="ChEBI" id="CHEBI:78346"/>
    </ligand>
</feature>
<name>KPRS_METAC</name>
<gene>
    <name evidence="1" type="primary">prs</name>
    <name type="ordered locus">MA_1167</name>
</gene>
<dbReference type="EC" id="2.7.6.1" evidence="1"/>
<dbReference type="EMBL" id="AE010299">
    <property type="protein sequence ID" value="AAM04588.1"/>
    <property type="molecule type" value="Genomic_DNA"/>
</dbReference>
<dbReference type="RefSeq" id="WP_011021191.1">
    <property type="nucleotide sequence ID" value="NC_003552.1"/>
</dbReference>
<dbReference type="SMR" id="Q8TRK8"/>
<dbReference type="FunCoup" id="Q8TRK8">
    <property type="interactions" value="221"/>
</dbReference>
<dbReference type="STRING" id="188937.MA_1167"/>
<dbReference type="EnsemblBacteria" id="AAM04588">
    <property type="protein sequence ID" value="AAM04588"/>
    <property type="gene ID" value="MA_1167"/>
</dbReference>
<dbReference type="GeneID" id="1473055"/>
<dbReference type="KEGG" id="mac:MA_1167"/>
<dbReference type="HOGENOM" id="CLU_033546_2_2_2"/>
<dbReference type="InParanoid" id="Q8TRK8"/>
<dbReference type="OrthoDB" id="371997at2157"/>
<dbReference type="PhylomeDB" id="Q8TRK8"/>
<dbReference type="UniPathway" id="UPA00087">
    <property type="reaction ID" value="UER00172"/>
</dbReference>
<dbReference type="Proteomes" id="UP000002487">
    <property type="component" value="Chromosome"/>
</dbReference>
<dbReference type="GO" id="GO:0005737">
    <property type="term" value="C:cytoplasm"/>
    <property type="evidence" value="ECO:0000318"/>
    <property type="project" value="GO_Central"/>
</dbReference>
<dbReference type="GO" id="GO:0002189">
    <property type="term" value="C:ribose phosphate diphosphokinase complex"/>
    <property type="evidence" value="ECO:0000318"/>
    <property type="project" value="GO_Central"/>
</dbReference>
<dbReference type="GO" id="GO:0005524">
    <property type="term" value="F:ATP binding"/>
    <property type="evidence" value="ECO:0007669"/>
    <property type="project" value="UniProtKB-KW"/>
</dbReference>
<dbReference type="GO" id="GO:0016301">
    <property type="term" value="F:kinase activity"/>
    <property type="evidence" value="ECO:0007669"/>
    <property type="project" value="UniProtKB-KW"/>
</dbReference>
<dbReference type="GO" id="GO:0000287">
    <property type="term" value="F:magnesium ion binding"/>
    <property type="evidence" value="ECO:0007669"/>
    <property type="project" value="UniProtKB-UniRule"/>
</dbReference>
<dbReference type="GO" id="GO:0004749">
    <property type="term" value="F:ribose phosphate diphosphokinase activity"/>
    <property type="evidence" value="ECO:0000318"/>
    <property type="project" value="GO_Central"/>
</dbReference>
<dbReference type="GO" id="GO:0006015">
    <property type="term" value="P:5-phosphoribose 1-diphosphate biosynthetic process"/>
    <property type="evidence" value="ECO:0000318"/>
    <property type="project" value="GO_Central"/>
</dbReference>
<dbReference type="GO" id="GO:0006164">
    <property type="term" value="P:purine nucleotide biosynthetic process"/>
    <property type="evidence" value="ECO:0000318"/>
    <property type="project" value="GO_Central"/>
</dbReference>
<dbReference type="CDD" id="cd06223">
    <property type="entry name" value="PRTases_typeI"/>
    <property type="match status" value="1"/>
</dbReference>
<dbReference type="FunFam" id="3.40.50.2020:FF:000074">
    <property type="entry name" value="Ribose-phosphate pyrophosphokinase"/>
    <property type="match status" value="1"/>
</dbReference>
<dbReference type="Gene3D" id="3.40.50.2020">
    <property type="match status" value="2"/>
</dbReference>
<dbReference type="HAMAP" id="MF_00583_A">
    <property type="entry name" value="RibP_PPkinase_A"/>
    <property type="match status" value="1"/>
</dbReference>
<dbReference type="InterPro" id="IPR029099">
    <property type="entry name" value="Pribosyltran_N"/>
</dbReference>
<dbReference type="InterPro" id="IPR000836">
    <property type="entry name" value="PRibTrfase_dom"/>
</dbReference>
<dbReference type="InterPro" id="IPR029057">
    <property type="entry name" value="PRTase-like"/>
</dbReference>
<dbReference type="InterPro" id="IPR005946">
    <property type="entry name" value="Rib-P_diPkinase"/>
</dbReference>
<dbReference type="InterPro" id="IPR037514">
    <property type="entry name" value="Rib-P_diPkinase_arc"/>
</dbReference>
<dbReference type="NCBIfam" id="NF002095">
    <property type="entry name" value="PRK00934.1"/>
    <property type="match status" value="1"/>
</dbReference>
<dbReference type="NCBIfam" id="TIGR01251">
    <property type="entry name" value="ribP_PPkin"/>
    <property type="match status" value="1"/>
</dbReference>
<dbReference type="PANTHER" id="PTHR10210">
    <property type="entry name" value="RIBOSE-PHOSPHATE DIPHOSPHOKINASE FAMILY MEMBER"/>
    <property type="match status" value="1"/>
</dbReference>
<dbReference type="PANTHER" id="PTHR10210:SF32">
    <property type="entry name" value="RIBOSE-PHOSPHATE PYROPHOSPHOKINASE 2"/>
    <property type="match status" value="1"/>
</dbReference>
<dbReference type="Pfam" id="PF00156">
    <property type="entry name" value="Pribosyltran"/>
    <property type="match status" value="1"/>
</dbReference>
<dbReference type="Pfam" id="PF13793">
    <property type="entry name" value="Pribosyltran_N"/>
    <property type="match status" value="1"/>
</dbReference>
<dbReference type="SMART" id="SM01400">
    <property type="entry name" value="Pribosyltran_N"/>
    <property type="match status" value="1"/>
</dbReference>
<dbReference type="SUPFAM" id="SSF53271">
    <property type="entry name" value="PRTase-like"/>
    <property type="match status" value="1"/>
</dbReference>
<keyword id="KW-0067">ATP-binding</keyword>
<keyword id="KW-0963">Cytoplasm</keyword>
<keyword id="KW-0418">Kinase</keyword>
<keyword id="KW-0460">Magnesium</keyword>
<keyword id="KW-0479">Metal-binding</keyword>
<keyword id="KW-0545">Nucleotide biosynthesis</keyword>
<keyword id="KW-0547">Nucleotide-binding</keyword>
<keyword id="KW-1185">Reference proteome</keyword>
<keyword id="KW-0808">Transferase</keyword>
<evidence type="ECO:0000255" key="1">
    <source>
        <dbReference type="HAMAP-Rule" id="MF_00583"/>
    </source>
</evidence>
<accession>Q8TRK8</accession>
<protein>
    <recommendedName>
        <fullName evidence="1">Ribose-phosphate pyrophosphokinase</fullName>
        <shortName evidence="1">RPPK</shortName>
        <ecNumber evidence="1">2.7.6.1</ecNumber>
    </recommendedName>
    <alternativeName>
        <fullName evidence="1">5-phospho-D-ribosyl alpha-1-diphosphate synthase</fullName>
    </alternativeName>
    <alternativeName>
        <fullName evidence="1">Phosphoribosyl diphosphate synthase</fullName>
    </alternativeName>
    <alternativeName>
        <fullName evidence="1">Phosphoribosyl pyrophosphate synthase</fullName>
        <shortName evidence="1">P-Rib-PP synthase</shortName>
        <shortName evidence="1">PRPP synthase</shortName>
        <shortName evidence="1">PRPPase</shortName>
    </alternativeName>
</protein>